<organism>
    <name type="scientific">Escherichia coli O6:K15:H31 (strain 536 / UPEC)</name>
    <dbReference type="NCBI Taxonomy" id="362663"/>
    <lineage>
        <taxon>Bacteria</taxon>
        <taxon>Pseudomonadati</taxon>
        <taxon>Pseudomonadota</taxon>
        <taxon>Gammaproteobacteria</taxon>
        <taxon>Enterobacterales</taxon>
        <taxon>Enterobacteriaceae</taxon>
        <taxon>Escherichia</taxon>
    </lineage>
</organism>
<protein>
    <recommendedName>
        <fullName evidence="1">Probable phosphatase YcdX</fullName>
        <ecNumber evidence="1">3.1.3.-</ecNumber>
    </recommendedName>
</protein>
<dbReference type="EC" id="3.1.3.-" evidence="1"/>
<dbReference type="EMBL" id="CP000247">
    <property type="protein sequence ID" value="ABG69039.1"/>
    <property type="molecule type" value="Genomic_DNA"/>
</dbReference>
<dbReference type="RefSeq" id="WP_000283664.1">
    <property type="nucleotide sequence ID" value="NC_008253.1"/>
</dbReference>
<dbReference type="SMR" id="Q0TJ40"/>
<dbReference type="GeneID" id="93776384"/>
<dbReference type="KEGG" id="ecp:ECP_1026"/>
<dbReference type="HOGENOM" id="CLU_061999_0_1_6"/>
<dbReference type="Proteomes" id="UP000009182">
    <property type="component" value="Chromosome"/>
</dbReference>
<dbReference type="GO" id="GO:0005829">
    <property type="term" value="C:cytosol"/>
    <property type="evidence" value="ECO:0007669"/>
    <property type="project" value="TreeGrafter"/>
</dbReference>
<dbReference type="GO" id="GO:0016791">
    <property type="term" value="F:phosphatase activity"/>
    <property type="evidence" value="ECO:0007669"/>
    <property type="project" value="UniProtKB-UniRule"/>
</dbReference>
<dbReference type="GO" id="GO:0008270">
    <property type="term" value="F:zinc ion binding"/>
    <property type="evidence" value="ECO:0007669"/>
    <property type="project" value="UniProtKB-UniRule"/>
</dbReference>
<dbReference type="GO" id="GO:0071978">
    <property type="term" value="P:bacterial-type flagellum-dependent swarming motility"/>
    <property type="evidence" value="ECO:0007669"/>
    <property type="project" value="TreeGrafter"/>
</dbReference>
<dbReference type="CDD" id="cd07437">
    <property type="entry name" value="PHP_HisPPase_Ycdx_like"/>
    <property type="match status" value="1"/>
</dbReference>
<dbReference type="FunFam" id="3.20.20.140:FF:000008">
    <property type="entry name" value="Probable phosphatase YcdX"/>
    <property type="match status" value="1"/>
</dbReference>
<dbReference type="Gene3D" id="3.20.20.140">
    <property type="entry name" value="Metal-dependent hydrolases"/>
    <property type="match status" value="1"/>
</dbReference>
<dbReference type="HAMAP" id="MF_01561">
    <property type="entry name" value="YcdX_phosphat"/>
    <property type="match status" value="1"/>
</dbReference>
<dbReference type="InterPro" id="IPR023710">
    <property type="entry name" value="Phosphatase_YcdX_put"/>
</dbReference>
<dbReference type="InterPro" id="IPR004013">
    <property type="entry name" value="PHP_dom"/>
</dbReference>
<dbReference type="InterPro" id="IPR050243">
    <property type="entry name" value="PHP_phosphatase"/>
</dbReference>
<dbReference type="InterPro" id="IPR003141">
    <property type="entry name" value="Pol/His_phosphatase_N"/>
</dbReference>
<dbReference type="InterPro" id="IPR016195">
    <property type="entry name" value="Pol/histidinol_Pase-like"/>
</dbReference>
<dbReference type="NCBIfam" id="NF006702">
    <property type="entry name" value="PRK09248.1"/>
    <property type="match status" value="1"/>
</dbReference>
<dbReference type="PANTHER" id="PTHR36928">
    <property type="entry name" value="PHOSPHATASE YCDX-RELATED"/>
    <property type="match status" value="1"/>
</dbReference>
<dbReference type="PANTHER" id="PTHR36928:SF1">
    <property type="entry name" value="PHOSPHATASE YCDX-RELATED"/>
    <property type="match status" value="1"/>
</dbReference>
<dbReference type="Pfam" id="PF02811">
    <property type="entry name" value="PHP"/>
    <property type="match status" value="1"/>
</dbReference>
<dbReference type="SMART" id="SM00481">
    <property type="entry name" value="POLIIIAc"/>
    <property type="match status" value="1"/>
</dbReference>
<dbReference type="SUPFAM" id="SSF89550">
    <property type="entry name" value="PHP domain-like"/>
    <property type="match status" value="1"/>
</dbReference>
<accession>Q0TJ40</accession>
<reference key="1">
    <citation type="journal article" date="2006" name="Mol. Microbiol.">
        <title>Role of pathogenicity island-associated integrases in the genome plasticity of uropathogenic Escherichia coli strain 536.</title>
        <authorList>
            <person name="Hochhut B."/>
            <person name="Wilde C."/>
            <person name="Balling G."/>
            <person name="Middendorf B."/>
            <person name="Dobrindt U."/>
            <person name="Brzuszkiewicz E."/>
            <person name="Gottschalk G."/>
            <person name="Carniel E."/>
            <person name="Hacker J."/>
        </authorList>
    </citation>
    <scope>NUCLEOTIDE SEQUENCE [LARGE SCALE GENOMIC DNA]</scope>
    <source>
        <strain>536 / UPEC</strain>
    </source>
</reference>
<proteinExistence type="inferred from homology"/>
<evidence type="ECO:0000255" key="1">
    <source>
        <dbReference type="HAMAP-Rule" id="MF_01561"/>
    </source>
</evidence>
<comment type="cofactor">
    <cofactor evidence="1">
        <name>Zn(2+)</name>
        <dbReference type="ChEBI" id="CHEBI:29105"/>
    </cofactor>
    <text evidence="1">Binds 3 Zn(2+) ions per subunit.</text>
</comment>
<comment type="subunit">
    <text evidence="1">Homotrimer.</text>
</comment>
<comment type="similarity">
    <text evidence="1">Belongs to the PHP family.</text>
</comment>
<feature type="chain" id="PRO_1000069019" description="Probable phosphatase YcdX">
    <location>
        <begin position="1"/>
        <end position="245"/>
    </location>
</feature>
<feature type="binding site" evidence="1">
    <location>
        <position position="7"/>
    </location>
    <ligand>
        <name>Zn(2+)</name>
        <dbReference type="ChEBI" id="CHEBI:29105"/>
        <label>1</label>
    </ligand>
</feature>
<feature type="binding site" evidence="1">
    <location>
        <position position="9"/>
    </location>
    <ligand>
        <name>Zn(2+)</name>
        <dbReference type="ChEBI" id="CHEBI:29105"/>
        <label>1</label>
    </ligand>
</feature>
<feature type="binding site" evidence="1">
    <location>
        <position position="15"/>
    </location>
    <ligand>
        <name>Zn(2+)</name>
        <dbReference type="ChEBI" id="CHEBI:29105"/>
        <label>2</label>
    </ligand>
</feature>
<feature type="binding site" evidence="1">
    <location>
        <position position="40"/>
    </location>
    <ligand>
        <name>Zn(2+)</name>
        <dbReference type="ChEBI" id="CHEBI:29105"/>
        <label>2</label>
    </ligand>
</feature>
<feature type="binding site" evidence="1">
    <location>
        <position position="73"/>
    </location>
    <ligand>
        <name>Zn(2+)</name>
        <dbReference type="ChEBI" id="CHEBI:29105"/>
        <label>1</label>
    </ligand>
</feature>
<feature type="binding site" evidence="1">
    <location>
        <position position="73"/>
    </location>
    <ligand>
        <name>Zn(2+)</name>
        <dbReference type="ChEBI" id="CHEBI:29105"/>
        <label>3</label>
    </ligand>
</feature>
<feature type="binding site" evidence="1">
    <location>
        <position position="101"/>
    </location>
    <ligand>
        <name>Zn(2+)</name>
        <dbReference type="ChEBI" id="CHEBI:29105"/>
        <label>3</label>
    </ligand>
</feature>
<feature type="binding site" evidence="1">
    <location>
        <position position="131"/>
    </location>
    <ligand>
        <name>Zn(2+)</name>
        <dbReference type="ChEBI" id="CHEBI:29105"/>
        <label>3</label>
    </ligand>
</feature>
<feature type="binding site" evidence="1">
    <location>
        <position position="192"/>
    </location>
    <ligand>
        <name>Zn(2+)</name>
        <dbReference type="ChEBI" id="CHEBI:29105"/>
        <label>1</label>
    </ligand>
</feature>
<feature type="binding site" evidence="1">
    <location>
        <position position="194"/>
    </location>
    <ligand>
        <name>Zn(2+)</name>
        <dbReference type="ChEBI" id="CHEBI:29105"/>
        <label>2</label>
    </ligand>
</feature>
<gene>
    <name evidence="1" type="primary">ycdX</name>
    <name type="ordered locus">ECP_1026</name>
</gene>
<name>YCDX_ECOL5</name>
<keyword id="KW-0378">Hydrolase</keyword>
<keyword id="KW-0479">Metal-binding</keyword>
<keyword id="KW-0862">Zinc</keyword>
<sequence>MYPVDLHMHTVASTHAYSTLSDYIAQAKQKGIKLFAITDHGPDMEDAPHHWHFINMRIWPRVVDGVGILRGIEANIKNVDGEIDCSGKMFDSLDLIIAGFHEPVFAPHDKATNTQAMIATIASGNVHIISHPGNPKYEIDVKAVAEAAAKHQVALEINNSSFLHSRKGSEDNCRAVAAAVRDAGGWVALGSDSHTAFTMGEFEECLKILDAVDFPPERILNVSPRRLLNFLESRGMAPIAEFADL</sequence>